<dbReference type="EC" id="4.1.1.37" evidence="1"/>
<dbReference type="EMBL" id="CP000576">
    <property type="protein sequence ID" value="ABO17232.1"/>
    <property type="molecule type" value="Genomic_DNA"/>
</dbReference>
<dbReference type="RefSeq" id="WP_011862599.1">
    <property type="nucleotide sequence ID" value="NC_009091.1"/>
</dbReference>
<dbReference type="SMR" id="A3PBV7"/>
<dbReference type="STRING" id="167546.P9301_06091"/>
<dbReference type="KEGG" id="pmg:P9301_06091"/>
<dbReference type="eggNOG" id="COG0407">
    <property type="taxonomic scope" value="Bacteria"/>
</dbReference>
<dbReference type="HOGENOM" id="CLU_040933_0_2_3"/>
<dbReference type="OrthoDB" id="9806656at2"/>
<dbReference type="UniPathway" id="UPA00251">
    <property type="reaction ID" value="UER00321"/>
</dbReference>
<dbReference type="Proteomes" id="UP000001430">
    <property type="component" value="Chromosome"/>
</dbReference>
<dbReference type="GO" id="GO:0005737">
    <property type="term" value="C:cytoplasm"/>
    <property type="evidence" value="ECO:0007669"/>
    <property type="project" value="UniProtKB-SubCell"/>
</dbReference>
<dbReference type="GO" id="GO:0004853">
    <property type="term" value="F:uroporphyrinogen decarboxylase activity"/>
    <property type="evidence" value="ECO:0007669"/>
    <property type="project" value="UniProtKB-UniRule"/>
</dbReference>
<dbReference type="GO" id="GO:0006782">
    <property type="term" value="P:protoporphyrinogen IX biosynthetic process"/>
    <property type="evidence" value="ECO:0007669"/>
    <property type="project" value="UniProtKB-UniRule"/>
</dbReference>
<dbReference type="CDD" id="cd00717">
    <property type="entry name" value="URO-D"/>
    <property type="match status" value="1"/>
</dbReference>
<dbReference type="FunFam" id="3.20.20.210:FF:000006">
    <property type="entry name" value="Uroporphyrinogen decarboxylase"/>
    <property type="match status" value="1"/>
</dbReference>
<dbReference type="Gene3D" id="3.20.20.210">
    <property type="match status" value="1"/>
</dbReference>
<dbReference type="HAMAP" id="MF_00218">
    <property type="entry name" value="URO_D"/>
    <property type="match status" value="1"/>
</dbReference>
<dbReference type="InterPro" id="IPR038071">
    <property type="entry name" value="UROD/MetE-like_sf"/>
</dbReference>
<dbReference type="InterPro" id="IPR006361">
    <property type="entry name" value="Uroporphyrinogen_deCO2ase_HemE"/>
</dbReference>
<dbReference type="InterPro" id="IPR000257">
    <property type="entry name" value="Uroporphyrinogen_deCOase"/>
</dbReference>
<dbReference type="NCBIfam" id="TIGR01464">
    <property type="entry name" value="hemE"/>
    <property type="match status" value="1"/>
</dbReference>
<dbReference type="PANTHER" id="PTHR21091">
    <property type="entry name" value="METHYLTETRAHYDROFOLATE:HOMOCYSTEINE METHYLTRANSFERASE RELATED"/>
    <property type="match status" value="1"/>
</dbReference>
<dbReference type="PANTHER" id="PTHR21091:SF169">
    <property type="entry name" value="UROPORPHYRINOGEN DECARBOXYLASE"/>
    <property type="match status" value="1"/>
</dbReference>
<dbReference type="Pfam" id="PF01208">
    <property type="entry name" value="URO-D"/>
    <property type="match status" value="1"/>
</dbReference>
<dbReference type="SUPFAM" id="SSF51726">
    <property type="entry name" value="UROD/MetE-like"/>
    <property type="match status" value="1"/>
</dbReference>
<dbReference type="PROSITE" id="PS00906">
    <property type="entry name" value="UROD_1"/>
    <property type="match status" value="1"/>
</dbReference>
<dbReference type="PROSITE" id="PS00907">
    <property type="entry name" value="UROD_2"/>
    <property type="match status" value="1"/>
</dbReference>
<sequence>MGENLPLLLSAALGKKVNRPPVWMMRQAGRYMKIYRDLRERYPSFRERSENPELSYEISMQPFHAFKPDGVILFSDILTPLPGMGINFEIIESKGPIIEDPIRTLNQVENLKELSPSESLSFVGEVLTSLKKDVNNEATVLGFVGAPWTLAAYVVEGKSSKNYSLIKSMAFNKPDLLHKLLDHFAKSIGEYLKYQIKSGAQVVQIFDSWAGQLSPQDYDIFAGPYQKKVVEIVKAEYPETPIILYISGSAGVLERMAKTGVDIISLDWTVDIEEACKRIPRGIGIQGNVDPGILFGNKESIKERIDNTFNKIKDRKYILNLGHGILPGTPEENAQTFFEHGKKLTY</sequence>
<name>DCUP_PROM0</name>
<protein>
    <recommendedName>
        <fullName evidence="1">Uroporphyrinogen decarboxylase</fullName>
        <shortName evidence="1">UPD</shortName>
        <shortName evidence="1">URO-D</shortName>
        <ecNumber evidence="1">4.1.1.37</ecNumber>
    </recommendedName>
</protein>
<organism>
    <name type="scientific">Prochlorococcus marinus (strain MIT 9301)</name>
    <dbReference type="NCBI Taxonomy" id="167546"/>
    <lineage>
        <taxon>Bacteria</taxon>
        <taxon>Bacillati</taxon>
        <taxon>Cyanobacteriota</taxon>
        <taxon>Cyanophyceae</taxon>
        <taxon>Synechococcales</taxon>
        <taxon>Prochlorococcaceae</taxon>
        <taxon>Prochlorococcus</taxon>
    </lineage>
</organism>
<comment type="function">
    <text evidence="1">Catalyzes the decarboxylation of four acetate groups of uroporphyrinogen-III to yield coproporphyrinogen-III.</text>
</comment>
<comment type="catalytic activity">
    <reaction evidence="1">
        <text>uroporphyrinogen III + 4 H(+) = coproporphyrinogen III + 4 CO2</text>
        <dbReference type="Rhea" id="RHEA:19865"/>
        <dbReference type="ChEBI" id="CHEBI:15378"/>
        <dbReference type="ChEBI" id="CHEBI:16526"/>
        <dbReference type="ChEBI" id="CHEBI:57308"/>
        <dbReference type="ChEBI" id="CHEBI:57309"/>
        <dbReference type="EC" id="4.1.1.37"/>
    </reaction>
</comment>
<comment type="pathway">
    <text evidence="1">Porphyrin-containing compound metabolism; protoporphyrin-IX biosynthesis; coproporphyrinogen-III from 5-aminolevulinate: step 4/4.</text>
</comment>
<comment type="subunit">
    <text evidence="1">Homodimer.</text>
</comment>
<comment type="subcellular location">
    <subcellularLocation>
        <location evidence="1">Cytoplasm</location>
    </subcellularLocation>
</comment>
<comment type="similarity">
    <text evidence="1">Belongs to the uroporphyrinogen decarboxylase family.</text>
</comment>
<reference key="1">
    <citation type="journal article" date="2007" name="PLoS Genet.">
        <title>Patterns and implications of gene gain and loss in the evolution of Prochlorococcus.</title>
        <authorList>
            <person name="Kettler G.C."/>
            <person name="Martiny A.C."/>
            <person name="Huang K."/>
            <person name="Zucker J."/>
            <person name="Coleman M.L."/>
            <person name="Rodrigue S."/>
            <person name="Chen F."/>
            <person name="Lapidus A."/>
            <person name="Ferriera S."/>
            <person name="Johnson J."/>
            <person name="Steglich C."/>
            <person name="Church G.M."/>
            <person name="Richardson P."/>
            <person name="Chisholm S.W."/>
        </authorList>
    </citation>
    <scope>NUCLEOTIDE SEQUENCE [LARGE SCALE GENOMIC DNA]</scope>
    <source>
        <strain>MIT 9301</strain>
    </source>
</reference>
<keyword id="KW-0963">Cytoplasm</keyword>
<keyword id="KW-0210">Decarboxylase</keyword>
<keyword id="KW-0456">Lyase</keyword>
<keyword id="KW-0627">Porphyrin biosynthesis</keyword>
<keyword id="KW-1185">Reference proteome</keyword>
<feature type="chain" id="PRO_1000023936" description="Uroporphyrinogen decarboxylase">
    <location>
        <begin position="1"/>
        <end position="346"/>
    </location>
</feature>
<feature type="binding site" evidence="1">
    <location>
        <begin position="26"/>
        <end position="30"/>
    </location>
    <ligand>
        <name>substrate</name>
    </ligand>
</feature>
<feature type="binding site" evidence="1">
    <location>
        <position position="76"/>
    </location>
    <ligand>
        <name>substrate</name>
    </ligand>
</feature>
<feature type="binding site" evidence="1">
    <location>
        <position position="153"/>
    </location>
    <ligand>
        <name>substrate</name>
    </ligand>
</feature>
<feature type="binding site" evidence="1">
    <location>
        <position position="208"/>
    </location>
    <ligand>
        <name>substrate</name>
    </ligand>
</feature>
<feature type="binding site" evidence="1">
    <location>
        <position position="323"/>
    </location>
    <ligand>
        <name>substrate</name>
    </ligand>
</feature>
<feature type="site" description="Transition state stabilizer" evidence="1">
    <location>
        <position position="76"/>
    </location>
</feature>
<proteinExistence type="inferred from homology"/>
<evidence type="ECO:0000255" key="1">
    <source>
        <dbReference type="HAMAP-Rule" id="MF_00218"/>
    </source>
</evidence>
<gene>
    <name evidence="1" type="primary">hemE</name>
    <name type="ordered locus">P9301_06091</name>
</gene>
<accession>A3PBV7</accession>